<organism>
    <name type="scientific">Staphylococcus aureus (strain N315)</name>
    <dbReference type="NCBI Taxonomy" id="158879"/>
    <lineage>
        <taxon>Bacteria</taxon>
        <taxon>Bacillati</taxon>
        <taxon>Bacillota</taxon>
        <taxon>Bacilli</taxon>
        <taxon>Bacillales</taxon>
        <taxon>Staphylococcaceae</taxon>
        <taxon>Staphylococcus</taxon>
    </lineage>
</organism>
<sequence>MNQEVKNKIFSILKITFATALFIFVAITLYRELSGINFKDTLVEFSKINRMSLVLLFIGGGASLVILSMYDVILSRALKMDISLGKVLRVSYIINALNAIVGFGGFIGAGVRAMVYKNYTHDKKKLVHFISLILISMLTGLSLLSLLIVFHVFDASLILDKITWVRWVLYVVSFFLPLFIIYSMVRPPDKNNRFVGLYCTLVSCVEWLAAAVVLYFCGVIVDAHVSFMSFIAIFIIAALSGLVSFIPGGFGAFDLVVLLGFKTLGVPEEKVLLMLLLYRFAYYFVPVIIALILSSFEFGTSAKKYIEGSKYFIPAKDVTSFLMSYQKDIIAKIPSLSLAILVFFTSMIFFVNNLTIVYDALYDGNHLTYYILLAIHTSACLLLLLNVVGIYKQSRRAIIFAMISILLITVATFFTYASYILITWLAIIFVLLIVAFRRARRLKRPVRMRNIVAMLLFSLFILYVNHIFIAGTLYALDIYTIEMHTSVLRYYFWLTILIIAIIIGMIAWLFDYQFSKVRISSKIEDCEEIINQYGGNYLSHLIYSGDKQFFTNENKTAFLMYRYKASSLVVLGDPLGDENAFDELLEAFYNYAEYLGYDVIFYQVTDQHMPLYHNFGNQFFKLGEEAIIDLTQFSTSGKKRRGFRATLNKFDELNISFEIIEPPFSTEFINELQHVSDLWLDNRQEMHFSVGQFNEEYLSKAPIGVMRNEENEVIAFCSLMPTYFNDAISVDLIRWLPELDLPLMDGLYLHMLLWSKEQGYTKFNMGMATLSNVGQLHYSYLRERLAGRVFEHFNGLYRFQGLRRYKSKYNPNWEPRFLVYRKDNSLWESLSKVMRVIRHK</sequence>
<comment type="function">
    <text evidence="1">Catalyzes the transfer of a lysyl group from L-lysyl-tRNA(Lys) to membrane-bound phosphatidylglycerol (PG), which produces lysylphosphatidylglycerol (LPG), a major component of the bacterial membrane with a positive net charge. LPG synthesis contributes to bacterial virulence as it is involved in the resistance mechanism against cationic antimicrobial peptides (CAMP) produces by the host's immune system (defensins, cathelicidins) and by the competing microorganisms (bacteriocins). In fact, the modification of anionic phosphatidylglycerol with positively charged L-lysine results in repulsion of the peptides (By similarity).</text>
</comment>
<comment type="catalytic activity">
    <reaction>
        <text>L-lysyl-tRNA(Lys) + a 1,2-diacyl-sn-glycero-3-phospho-(1'-sn-glycerol) = a 1,2-diacyl-sn-glycero-3-phospho-1'-(3'-O-L-lysyl)-sn-glycerol + tRNA(Lys)</text>
        <dbReference type="Rhea" id="RHEA:10668"/>
        <dbReference type="Rhea" id="RHEA-COMP:9696"/>
        <dbReference type="Rhea" id="RHEA-COMP:9697"/>
        <dbReference type="ChEBI" id="CHEBI:64716"/>
        <dbReference type="ChEBI" id="CHEBI:75792"/>
        <dbReference type="ChEBI" id="CHEBI:78442"/>
        <dbReference type="ChEBI" id="CHEBI:78529"/>
        <dbReference type="EC" id="2.3.2.3"/>
    </reaction>
</comment>
<comment type="subcellular location">
    <subcellularLocation>
        <location>Cell membrane</location>
        <topology>Multi-pass membrane protein</topology>
    </subcellularLocation>
</comment>
<comment type="similarity">
    <text evidence="3">Belongs to the LPG synthase family.</text>
</comment>
<evidence type="ECO:0000250" key="1"/>
<evidence type="ECO:0000255" key="2"/>
<evidence type="ECO:0000305" key="3"/>
<accession>Q7A5R9</accession>
<dbReference type="EC" id="2.3.2.3"/>
<dbReference type="EMBL" id="BA000018">
    <property type="protein sequence ID" value="BAB42452.1"/>
    <property type="molecule type" value="Genomic_DNA"/>
</dbReference>
<dbReference type="PIR" id="H89911">
    <property type="entry name" value="H89911"/>
</dbReference>
<dbReference type="RefSeq" id="WP_001071136.1">
    <property type="nucleotide sequence ID" value="NC_002745.2"/>
</dbReference>
<dbReference type="SMR" id="Q7A5R9"/>
<dbReference type="EnsemblBacteria" id="BAB42452">
    <property type="protein sequence ID" value="BAB42452"/>
    <property type="gene ID" value="BAB42452"/>
</dbReference>
<dbReference type="KEGG" id="sau:SA1193"/>
<dbReference type="HOGENOM" id="CLU_008255_7_1_9"/>
<dbReference type="GO" id="GO:0005886">
    <property type="term" value="C:plasma membrane"/>
    <property type="evidence" value="ECO:0007669"/>
    <property type="project" value="UniProtKB-SubCell"/>
</dbReference>
<dbReference type="GO" id="GO:0050071">
    <property type="term" value="F:phosphatidylglycerol lysyltransferase activity"/>
    <property type="evidence" value="ECO:0007669"/>
    <property type="project" value="UniProtKB-EC"/>
</dbReference>
<dbReference type="GO" id="GO:0006629">
    <property type="term" value="P:lipid metabolic process"/>
    <property type="evidence" value="ECO:0007669"/>
    <property type="project" value="UniProtKB-KW"/>
</dbReference>
<dbReference type="GO" id="GO:0055091">
    <property type="term" value="P:phospholipid homeostasis"/>
    <property type="evidence" value="ECO:0007669"/>
    <property type="project" value="TreeGrafter"/>
</dbReference>
<dbReference type="GO" id="GO:0046677">
    <property type="term" value="P:response to antibiotic"/>
    <property type="evidence" value="ECO:0007669"/>
    <property type="project" value="UniProtKB-KW"/>
</dbReference>
<dbReference type="InterPro" id="IPR016181">
    <property type="entry name" value="Acyl_CoA_acyltransferase"/>
</dbReference>
<dbReference type="InterPro" id="IPR022791">
    <property type="entry name" value="L-PG_synthase/AglD"/>
</dbReference>
<dbReference type="InterPro" id="IPR024320">
    <property type="entry name" value="LPG_synthase_C"/>
</dbReference>
<dbReference type="InterPro" id="IPR051211">
    <property type="entry name" value="PG_lysyltransferase"/>
</dbReference>
<dbReference type="NCBIfam" id="NF033480">
    <property type="entry name" value="bifunc_MprF"/>
    <property type="match status" value="1"/>
</dbReference>
<dbReference type="NCBIfam" id="TIGR00374">
    <property type="entry name" value="flippase-like domain"/>
    <property type="match status" value="1"/>
</dbReference>
<dbReference type="PANTHER" id="PTHR34697">
    <property type="entry name" value="PHOSPHATIDYLGLYCEROL LYSYLTRANSFERASE"/>
    <property type="match status" value="1"/>
</dbReference>
<dbReference type="PANTHER" id="PTHR34697:SF2">
    <property type="entry name" value="PHOSPHATIDYLGLYCEROL LYSYLTRANSFERASE"/>
    <property type="match status" value="1"/>
</dbReference>
<dbReference type="Pfam" id="PF09924">
    <property type="entry name" value="LPG_synthase_C"/>
    <property type="match status" value="1"/>
</dbReference>
<dbReference type="Pfam" id="PF03706">
    <property type="entry name" value="LPG_synthase_TM"/>
    <property type="match status" value="1"/>
</dbReference>
<dbReference type="SUPFAM" id="SSF55729">
    <property type="entry name" value="Acyl-CoA N-acyltransferases (Nat)"/>
    <property type="match status" value="1"/>
</dbReference>
<reference key="1">
    <citation type="journal article" date="2001" name="Lancet">
        <title>Whole genome sequencing of meticillin-resistant Staphylococcus aureus.</title>
        <authorList>
            <person name="Kuroda M."/>
            <person name="Ohta T."/>
            <person name="Uchiyama I."/>
            <person name="Baba T."/>
            <person name="Yuzawa H."/>
            <person name="Kobayashi I."/>
            <person name="Cui L."/>
            <person name="Oguchi A."/>
            <person name="Aoki K."/>
            <person name="Nagai Y."/>
            <person name="Lian J.-Q."/>
            <person name="Ito T."/>
            <person name="Kanamori M."/>
            <person name="Matsumaru H."/>
            <person name="Maruyama A."/>
            <person name="Murakami H."/>
            <person name="Hosoyama A."/>
            <person name="Mizutani-Ui Y."/>
            <person name="Takahashi N.K."/>
            <person name="Sawano T."/>
            <person name="Inoue R."/>
            <person name="Kaito C."/>
            <person name="Sekimizu K."/>
            <person name="Hirakawa H."/>
            <person name="Kuhara S."/>
            <person name="Goto S."/>
            <person name="Yabuzaki J."/>
            <person name="Kanehisa M."/>
            <person name="Yamashita A."/>
            <person name="Oshima K."/>
            <person name="Furuya K."/>
            <person name="Yoshino C."/>
            <person name="Shiba T."/>
            <person name="Hattori M."/>
            <person name="Ogasawara N."/>
            <person name="Hayashi H."/>
            <person name="Hiramatsu K."/>
        </authorList>
    </citation>
    <scope>NUCLEOTIDE SEQUENCE [LARGE SCALE GENOMIC DNA]</scope>
    <source>
        <strain>N315</strain>
    </source>
</reference>
<reference key="2">
    <citation type="submission" date="2007-10" db="UniProtKB">
        <title>Shotgun proteomic analysis of total and membrane protein extracts of S. aureus strain N315.</title>
        <authorList>
            <person name="Vaezzadeh A.R."/>
            <person name="Deshusses J."/>
            <person name="Lescuyer P."/>
            <person name="Hochstrasser D.F."/>
        </authorList>
    </citation>
    <scope>IDENTIFICATION BY MASS SPECTROMETRY [LARGE SCALE ANALYSIS]</scope>
    <source>
        <strain>N315</strain>
    </source>
</reference>
<gene>
    <name type="primary">mprF</name>
    <name type="ordered locus">SA1193</name>
</gene>
<proteinExistence type="evidence at protein level"/>
<keyword id="KW-0046">Antibiotic resistance</keyword>
<keyword id="KW-1003">Cell membrane</keyword>
<keyword id="KW-0443">Lipid metabolism</keyword>
<keyword id="KW-0472">Membrane</keyword>
<keyword id="KW-0808">Transferase</keyword>
<keyword id="KW-0812">Transmembrane</keyword>
<keyword id="KW-1133">Transmembrane helix</keyword>
<keyword id="KW-0843">Virulence</keyword>
<protein>
    <recommendedName>
        <fullName>Phosphatidylglycerol lysyltransferase</fullName>
        <ecNumber>2.3.2.3</ecNumber>
    </recommendedName>
    <alternativeName>
        <fullName>Lysylphosphatidylglycerol synthase</fullName>
        <shortName>LPG synthase</shortName>
    </alternativeName>
    <alternativeName>
        <fullName>Multiple peptide resistance factor</fullName>
    </alternativeName>
</protein>
<feature type="chain" id="PRO_0000096561" description="Phosphatidylglycerol lysyltransferase">
    <location>
        <begin position="1"/>
        <end position="840"/>
    </location>
</feature>
<feature type="topological domain" description="Cytoplasmic" evidence="2">
    <location>
        <begin position="1"/>
        <end position="8"/>
    </location>
</feature>
<feature type="transmembrane region" description="Helical" evidence="2">
    <location>
        <begin position="9"/>
        <end position="29"/>
    </location>
</feature>
<feature type="topological domain" description="Extracellular" evidence="2">
    <location>
        <begin position="30"/>
        <end position="52"/>
    </location>
</feature>
<feature type="transmembrane region" description="Helical" evidence="2">
    <location>
        <begin position="53"/>
        <end position="73"/>
    </location>
</feature>
<feature type="topological domain" description="Cytoplasmic" evidence="2">
    <location>
        <begin position="74"/>
        <end position="89"/>
    </location>
</feature>
<feature type="transmembrane region" description="Helical" evidence="2">
    <location>
        <begin position="90"/>
        <end position="110"/>
    </location>
</feature>
<feature type="topological domain" description="Extracellular" evidence="2">
    <location>
        <begin position="111"/>
        <end position="128"/>
    </location>
</feature>
<feature type="transmembrane region" description="Helical" evidence="2">
    <location>
        <begin position="129"/>
        <end position="149"/>
    </location>
</feature>
<feature type="topological domain" description="Cytoplasmic" evidence="2">
    <location>
        <begin position="150"/>
        <end position="161"/>
    </location>
</feature>
<feature type="transmembrane region" description="Helical" evidence="2">
    <location>
        <begin position="162"/>
        <end position="182"/>
    </location>
</feature>
<feature type="topological domain" description="Extracellular" evidence="2">
    <location>
        <begin position="183"/>
        <end position="200"/>
    </location>
</feature>
<feature type="transmembrane region" description="Helical" evidence="2">
    <location>
        <begin position="201"/>
        <end position="221"/>
    </location>
</feature>
<feature type="topological domain" description="Cytoplasmic" evidence="2">
    <location>
        <begin position="222"/>
        <end position="229"/>
    </location>
</feature>
<feature type="transmembrane region" description="Helical" evidence="2">
    <location>
        <begin position="230"/>
        <end position="250"/>
    </location>
</feature>
<feature type="topological domain" description="Extracellular" evidence="2">
    <location>
        <begin position="251"/>
        <end position="271"/>
    </location>
</feature>
<feature type="transmembrane region" description="Helical" evidence="2">
    <location>
        <begin position="272"/>
        <end position="292"/>
    </location>
</feature>
<feature type="topological domain" description="Cytoplasmic" evidence="2">
    <location>
        <begin position="293"/>
        <end position="337"/>
    </location>
</feature>
<feature type="transmembrane region" description="Helical" evidence="2">
    <location>
        <begin position="338"/>
        <end position="358"/>
    </location>
</feature>
<feature type="topological domain" description="Extracellular" evidence="2">
    <location>
        <begin position="359"/>
        <end position="369"/>
    </location>
</feature>
<feature type="transmembrane region" description="Helical" evidence="2">
    <location>
        <begin position="370"/>
        <end position="390"/>
    </location>
</feature>
<feature type="topological domain" description="Cytoplasmic" evidence="2">
    <location>
        <begin position="391"/>
        <end position="394"/>
    </location>
</feature>
<feature type="transmembrane region" description="Helical" evidence="2">
    <location>
        <begin position="395"/>
        <end position="415"/>
    </location>
</feature>
<feature type="transmembrane region" description="Helical" evidence="2">
    <location>
        <begin position="416"/>
        <end position="436"/>
    </location>
</feature>
<feature type="topological domain" description="Cytoplasmic" evidence="2">
    <location>
        <begin position="437"/>
        <end position="450"/>
    </location>
</feature>
<feature type="transmembrane region" description="Helical" evidence="2">
    <location>
        <begin position="451"/>
        <end position="471"/>
    </location>
</feature>
<feature type="topological domain" description="Extracellular" evidence="2">
    <location>
        <begin position="472"/>
        <end position="489"/>
    </location>
</feature>
<feature type="transmembrane region" description="Helical" evidence="2">
    <location>
        <begin position="490"/>
        <end position="510"/>
    </location>
</feature>
<feature type="topological domain" description="Cytoplasmic" evidence="2">
    <location>
        <begin position="511"/>
        <end position="840"/>
    </location>
</feature>
<name>MPRF_STAAN</name>